<sequence>MTMEAKAILRTARISPQKARLVADQVRGLPAERAVNLLKFSDKKAAHLIKKVVESAIANAENNQGADVDELKVQTIMVDEGPTLKRFMARAKGRGTRILKRTSHITVVVGAAK</sequence>
<accession>B2FQ50</accession>
<comment type="function">
    <text evidence="1">This protein binds specifically to 23S rRNA; its binding is stimulated by other ribosomal proteins, e.g. L4, L17, and L20. It is important during the early stages of 50S assembly. It makes multiple contacts with different domains of the 23S rRNA in the assembled 50S subunit and ribosome (By similarity).</text>
</comment>
<comment type="function">
    <text evidence="1">The globular domain of the protein is located near the polypeptide exit tunnel on the outside of the subunit, while an extended beta-hairpin is found that lines the wall of the exit tunnel in the center of the 70S ribosome.</text>
</comment>
<comment type="subunit">
    <text evidence="1">Part of the 50S ribosomal subunit.</text>
</comment>
<comment type="similarity">
    <text evidence="1">Belongs to the universal ribosomal protein uL22 family.</text>
</comment>
<protein>
    <recommendedName>
        <fullName evidence="1">Large ribosomal subunit protein uL22</fullName>
    </recommendedName>
    <alternativeName>
        <fullName evidence="2">50S ribosomal protein L22</fullName>
    </alternativeName>
</protein>
<evidence type="ECO:0000255" key="1">
    <source>
        <dbReference type="HAMAP-Rule" id="MF_01331"/>
    </source>
</evidence>
<evidence type="ECO:0000305" key="2"/>
<gene>
    <name evidence="1" type="primary">rplV</name>
    <name type="ordered locus">Smlt0911</name>
</gene>
<organism>
    <name type="scientific">Stenotrophomonas maltophilia (strain K279a)</name>
    <dbReference type="NCBI Taxonomy" id="522373"/>
    <lineage>
        <taxon>Bacteria</taxon>
        <taxon>Pseudomonadati</taxon>
        <taxon>Pseudomonadota</taxon>
        <taxon>Gammaproteobacteria</taxon>
        <taxon>Lysobacterales</taxon>
        <taxon>Lysobacteraceae</taxon>
        <taxon>Stenotrophomonas</taxon>
        <taxon>Stenotrophomonas maltophilia group</taxon>
    </lineage>
</organism>
<feature type="chain" id="PRO_1000142314" description="Large ribosomal subunit protein uL22">
    <location>
        <begin position="1"/>
        <end position="113"/>
    </location>
</feature>
<reference key="1">
    <citation type="journal article" date="2008" name="Genome Biol.">
        <title>The complete genome, comparative and functional analysis of Stenotrophomonas maltophilia reveals an organism heavily shielded by drug resistance determinants.</title>
        <authorList>
            <person name="Crossman L.C."/>
            <person name="Gould V.C."/>
            <person name="Dow J.M."/>
            <person name="Vernikos G.S."/>
            <person name="Okazaki A."/>
            <person name="Sebaihia M."/>
            <person name="Saunders D."/>
            <person name="Arrowsmith C."/>
            <person name="Carver T."/>
            <person name="Peters N."/>
            <person name="Adlem E."/>
            <person name="Kerhornou A."/>
            <person name="Lord A."/>
            <person name="Murphy L."/>
            <person name="Seeger K."/>
            <person name="Squares R."/>
            <person name="Rutter S."/>
            <person name="Quail M.A."/>
            <person name="Rajandream M.A."/>
            <person name="Harris D."/>
            <person name="Churcher C."/>
            <person name="Bentley S.D."/>
            <person name="Parkhill J."/>
            <person name="Thomson N.R."/>
            <person name="Avison M.B."/>
        </authorList>
    </citation>
    <scope>NUCLEOTIDE SEQUENCE [LARGE SCALE GENOMIC DNA]</scope>
    <source>
        <strain>K279a</strain>
    </source>
</reference>
<proteinExistence type="inferred from homology"/>
<keyword id="KW-1185">Reference proteome</keyword>
<keyword id="KW-0687">Ribonucleoprotein</keyword>
<keyword id="KW-0689">Ribosomal protein</keyword>
<keyword id="KW-0694">RNA-binding</keyword>
<keyword id="KW-0699">rRNA-binding</keyword>
<dbReference type="EMBL" id="AM743169">
    <property type="protein sequence ID" value="CAQ44480.1"/>
    <property type="molecule type" value="Genomic_DNA"/>
</dbReference>
<dbReference type="SMR" id="B2FQ50"/>
<dbReference type="EnsemblBacteria" id="CAQ44480">
    <property type="protein sequence ID" value="CAQ44480"/>
    <property type="gene ID" value="Smlt0911"/>
</dbReference>
<dbReference type="KEGG" id="sml:Smlt0911"/>
<dbReference type="eggNOG" id="COG0091">
    <property type="taxonomic scope" value="Bacteria"/>
</dbReference>
<dbReference type="HOGENOM" id="CLU_083987_3_3_6"/>
<dbReference type="Proteomes" id="UP000008840">
    <property type="component" value="Chromosome"/>
</dbReference>
<dbReference type="GO" id="GO:0022625">
    <property type="term" value="C:cytosolic large ribosomal subunit"/>
    <property type="evidence" value="ECO:0007669"/>
    <property type="project" value="TreeGrafter"/>
</dbReference>
<dbReference type="GO" id="GO:0019843">
    <property type="term" value="F:rRNA binding"/>
    <property type="evidence" value="ECO:0007669"/>
    <property type="project" value="UniProtKB-UniRule"/>
</dbReference>
<dbReference type="GO" id="GO:0003735">
    <property type="term" value="F:structural constituent of ribosome"/>
    <property type="evidence" value="ECO:0007669"/>
    <property type="project" value="InterPro"/>
</dbReference>
<dbReference type="GO" id="GO:0006412">
    <property type="term" value="P:translation"/>
    <property type="evidence" value="ECO:0007669"/>
    <property type="project" value="UniProtKB-UniRule"/>
</dbReference>
<dbReference type="CDD" id="cd00336">
    <property type="entry name" value="Ribosomal_L22"/>
    <property type="match status" value="1"/>
</dbReference>
<dbReference type="FunFam" id="3.90.470.10:FF:000001">
    <property type="entry name" value="50S ribosomal protein L22"/>
    <property type="match status" value="1"/>
</dbReference>
<dbReference type="Gene3D" id="3.90.470.10">
    <property type="entry name" value="Ribosomal protein L22/L17"/>
    <property type="match status" value="1"/>
</dbReference>
<dbReference type="HAMAP" id="MF_01331_B">
    <property type="entry name" value="Ribosomal_uL22_B"/>
    <property type="match status" value="1"/>
</dbReference>
<dbReference type="InterPro" id="IPR001063">
    <property type="entry name" value="Ribosomal_uL22"/>
</dbReference>
<dbReference type="InterPro" id="IPR005727">
    <property type="entry name" value="Ribosomal_uL22_bac/chlpt-type"/>
</dbReference>
<dbReference type="InterPro" id="IPR047867">
    <property type="entry name" value="Ribosomal_uL22_bac/org-type"/>
</dbReference>
<dbReference type="InterPro" id="IPR018260">
    <property type="entry name" value="Ribosomal_uL22_CS"/>
</dbReference>
<dbReference type="InterPro" id="IPR036394">
    <property type="entry name" value="Ribosomal_uL22_sf"/>
</dbReference>
<dbReference type="NCBIfam" id="TIGR01044">
    <property type="entry name" value="rplV_bact"/>
    <property type="match status" value="1"/>
</dbReference>
<dbReference type="PANTHER" id="PTHR13501">
    <property type="entry name" value="CHLOROPLAST 50S RIBOSOMAL PROTEIN L22-RELATED"/>
    <property type="match status" value="1"/>
</dbReference>
<dbReference type="PANTHER" id="PTHR13501:SF8">
    <property type="entry name" value="LARGE RIBOSOMAL SUBUNIT PROTEIN UL22M"/>
    <property type="match status" value="1"/>
</dbReference>
<dbReference type="Pfam" id="PF00237">
    <property type="entry name" value="Ribosomal_L22"/>
    <property type="match status" value="1"/>
</dbReference>
<dbReference type="SUPFAM" id="SSF54843">
    <property type="entry name" value="Ribosomal protein L22"/>
    <property type="match status" value="1"/>
</dbReference>
<dbReference type="PROSITE" id="PS00464">
    <property type="entry name" value="RIBOSOMAL_L22"/>
    <property type="match status" value="1"/>
</dbReference>
<name>RL22_STRMK</name>